<feature type="chain" id="PRO_0000211044" description="Probable U3 small nucleolar RNA-associated protein 11">
    <location>
        <begin position="1"/>
        <end position="253"/>
    </location>
</feature>
<feature type="region of interest" description="Disordered" evidence="2">
    <location>
        <begin position="1"/>
        <end position="21"/>
    </location>
</feature>
<feature type="modified residue" description="Phosphothreonine" evidence="1">
    <location>
        <position position="90"/>
    </location>
</feature>
<feature type="modified residue" description="Phosphoserine" evidence="1">
    <location>
        <position position="241"/>
    </location>
</feature>
<feature type="cross-link" description="Glycyl lysine isopeptide (Lys-Gly) (interchain with G-Cter in SUMO2)" evidence="1">
    <location>
        <position position="74"/>
    </location>
</feature>
<feature type="cross-link" description="Glycyl lysine isopeptide (Lys-Gly) (interchain with G-Cter in SUMO2)" evidence="1">
    <location>
        <position position="83"/>
    </location>
</feature>
<feature type="cross-link" description="Glycyl lysine isopeptide (Lys-Gly) (interchain with G-Cter in SUMO2)" evidence="1">
    <location>
        <position position="86"/>
    </location>
</feature>
<feature type="cross-link" description="Glycyl lysine isopeptide (Lys-Gly) (interchain with G-Cter in SUMO2)" evidence="1">
    <location>
        <position position="103"/>
    </location>
</feature>
<feature type="cross-link" description="Glycyl lysine isopeptide (Lys-Gly) (interchain with G-Cter in SUMO2)" evidence="1">
    <location>
        <position position="120"/>
    </location>
</feature>
<feature type="cross-link" description="Glycyl lysine isopeptide (Lys-Gly) (interchain with G-Cter in SUMO2)" evidence="1">
    <location>
        <position position="143"/>
    </location>
</feature>
<feature type="cross-link" description="Glycyl lysine isopeptide (Lys-Gly) (interchain with G-Cter in SUMO2)" evidence="1">
    <location>
        <position position="144"/>
    </location>
</feature>
<feature type="cross-link" description="Glycyl lysine isopeptide (Lys-Gly) (interchain with G-Cter in SUMO2)" evidence="1">
    <location>
        <position position="180"/>
    </location>
</feature>
<feature type="cross-link" description="Glycyl lysine isopeptide (Lys-Gly) (interchain with G-Cter in SUMO2)" evidence="1">
    <location>
        <position position="211"/>
    </location>
</feature>
<feature type="cross-link" description="Glycyl lysine isopeptide (Lys-Gly) (interchain with G-Cter in SUMO2)" evidence="1">
    <location>
        <position position="218"/>
    </location>
</feature>
<feature type="cross-link" description="Glycyl lysine isopeptide (Lys-Gly) (interchain with G-Cter in SUMO2)" evidence="1">
    <location>
        <position position="235"/>
    </location>
</feature>
<feature type="cross-link" description="Glycyl lysine isopeptide (Lys-Gly) (interchain with G-Cter in SUMO2)" evidence="1">
    <location>
        <position position="236"/>
    </location>
</feature>
<feature type="cross-link" description="Glycyl lysine isopeptide (Lys-Gly) (interchain with G-Cter in SUMO2)" evidence="1">
    <location>
        <position position="246"/>
    </location>
</feature>
<dbReference type="EMBL" id="AF350421">
    <property type="protein sequence ID" value="AAL74316.1"/>
    <property type="molecule type" value="mRNA"/>
</dbReference>
<dbReference type="SMR" id="Q8R5K5"/>
<dbReference type="FunCoup" id="Q8R5K5">
    <property type="interactions" value="1758"/>
</dbReference>
<dbReference type="STRING" id="10116.ENSRNOP00000009882"/>
<dbReference type="PhosphoSitePlus" id="Q8R5K5"/>
<dbReference type="AGR" id="RGD:621412"/>
<dbReference type="RGD" id="621412">
    <property type="gene designation" value="Utp11"/>
</dbReference>
<dbReference type="InParanoid" id="Q8R5K5"/>
<dbReference type="PhylomeDB" id="Q8R5K5"/>
<dbReference type="Reactome" id="R-RNO-6791226">
    <property type="pathway name" value="Major pathway of rRNA processing in the nucleolus and cytosol"/>
</dbReference>
<dbReference type="PRO" id="PR:Q8R5K5"/>
<dbReference type="Proteomes" id="UP000002494">
    <property type="component" value="Unplaced"/>
</dbReference>
<dbReference type="GO" id="GO:0005737">
    <property type="term" value="C:cytoplasm"/>
    <property type="evidence" value="ECO:0000266"/>
    <property type="project" value="RGD"/>
</dbReference>
<dbReference type="GO" id="GO:0005615">
    <property type="term" value="C:extracellular space"/>
    <property type="evidence" value="ECO:0000266"/>
    <property type="project" value="RGD"/>
</dbReference>
<dbReference type="GO" id="GO:0005730">
    <property type="term" value="C:nucleolus"/>
    <property type="evidence" value="ECO:0000266"/>
    <property type="project" value="RGD"/>
</dbReference>
<dbReference type="GO" id="GO:0032040">
    <property type="term" value="C:small-subunit processome"/>
    <property type="evidence" value="ECO:0000250"/>
    <property type="project" value="UniProtKB"/>
</dbReference>
<dbReference type="GO" id="GO:0007399">
    <property type="term" value="P:nervous system development"/>
    <property type="evidence" value="ECO:0000266"/>
    <property type="project" value="RGD"/>
</dbReference>
<dbReference type="GO" id="GO:0043065">
    <property type="term" value="P:positive regulation of apoptotic process"/>
    <property type="evidence" value="ECO:0000266"/>
    <property type="project" value="RGD"/>
</dbReference>
<dbReference type="GO" id="GO:0042274">
    <property type="term" value="P:ribosomal small subunit biogenesis"/>
    <property type="evidence" value="ECO:0000250"/>
    <property type="project" value="UniProtKB"/>
</dbReference>
<dbReference type="GO" id="GO:0006364">
    <property type="term" value="P:rRNA processing"/>
    <property type="evidence" value="ECO:0007669"/>
    <property type="project" value="UniProtKB-KW"/>
</dbReference>
<dbReference type="InterPro" id="IPR007144">
    <property type="entry name" value="SSU_processome_Utp11"/>
</dbReference>
<dbReference type="PANTHER" id="PTHR12838">
    <property type="entry name" value="U3 SMALL NUCLEOLAR RNA-ASSOCIATED PROTEIN 11"/>
    <property type="match status" value="1"/>
</dbReference>
<dbReference type="PANTHER" id="PTHR12838:SF0">
    <property type="entry name" value="U3 SMALL NUCLEOLAR RNA-ASSOCIATED PROTEIN 11-RELATED"/>
    <property type="match status" value="1"/>
</dbReference>
<dbReference type="Pfam" id="PF03998">
    <property type="entry name" value="Utp11"/>
    <property type="match status" value="1"/>
</dbReference>
<dbReference type="PIRSF" id="PIRSF015952">
    <property type="entry name" value="U3snoRNP11"/>
    <property type="match status" value="1"/>
</dbReference>
<sequence>MAAAFRKAVKSRQREYRERSQPGFRKHLGLLEKKKDYKLRADDYRKKQEYLKALRKKALEKNPDEFYYKMTRVKLQDGVHIIKETKEEVTPEQLKLMRTQDVKYIEMKRVAEAKKIERLKSELHLLDFQGKQQNRHVFFFDTKKEVEQFDVAAHLQTAPELVDRVFNRPRIETLQKEKVKGVTNQTGLKRIAKERQKQYNCLTQRIEREKKLFVIAQKIQTRKDLMDKTQKVKVKKETVNSPAIYKFQSRRKR</sequence>
<protein>
    <recommendedName>
        <fullName>Probable U3 small nucleolar RNA-associated protein 11</fullName>
        <shortName>U3 snoRNA-associated protein 11</shortName>
    </recommendedName>
    <alternativeName>
        <fullName>UTP11-like protein</fullName>
    </alternativeName>
</protein>
<proteinExistence type="evidence at transcript level"/>
<reference key="1">
    <citation type="journal article" date="2002" name="Eur. J. Neurosci.">
        <title>Characterizing CGI-94 (comparative gene identification-94) which is down-regulated in the hippocampus of early stage Alzheimer's disease brain.</title>
        <authorList>
            <person name="Heese K."/>
            <person name="Nakayama T."/>
            <person name="Hata R."/>
            <person name="Masumura M."/>
            <person name="Akatsu H."/>
            <person name="Li F."/>
            <person name="Nagai Y."/>
            <person name="Yamamoto T."/>
            <person name="Kosaka K."/>
            <person name="Suemoto T."/>
            <person name="Sawada T."/>
        </authorList>
    </citation>
    <scope>NUCLEOTIDE SEQUENCE [MRNA]</scope>
    <scope>SUBCELLULAR LOCATION</scope>
    <source>
        <strain>Sprague-Dawley</strain>
        <tissue>Brain</tissue>
    </source>
</reference>
<gene>
    <name evidence="5" type="primary">Utp11</name>
    <name evidence="5" type="synonym">Utp11l</name>
</gene>
<comment type="function">
    <text evidence="1">Part of the small subunit (SSU) processome, first precursor of the small eukaryotic ribosomal subunit. During the assembly of the SSU processome in the nucleolus, many ribosome biogenesis factors, an RNA chaperone and ribosomal proteins associate with the nascent pre-rRNA and work in concert to generate RNA folding, modifications, rearrangements and cleavage as well as targeted degradation of pre-ribosomal RNA by the RNA exosome. Involved in nucleolar processing of pre-18S ribosomal RNA.</text>
</comment>
<comment type="subunit">
    <text evidence="1">Part of the small subunit (SSU) processome, composed of more than 70 proteins and the RNA chaperone small nucleolar RNA (snoRNA) U3.</text>
</comment>
<comment type="subcellular location">
    <subcellularLocation>
        <location evidence="3">Nucleus</location>
        <location evidence="3">Nucleolus</location>
    </subcellularLocation>
</comment>
<comment type="similarity">
    <text evidence="4">Belongs to the UTP11 family.</text>
</comment>
<organism>
    <name type="scientific">Rattus norvegicus</name>
    <name type="common">Rat</name>
    <dbReference type="NCBI Taxonomy" id="10116"/>
    <lineage>
        <taxon>Eukaryota</taxon>
        <taxon>Metazoa</taxon>
        <taxon>Chordata</taxon>
        <taxon>Craniata</taxon>
        <taxon>Vertebrata</taxon>
        <taxon>Euteleostomi</taxon>
        <taxon>Mammalia</taxon>
        <taxon>Eutheria</taxon>
        <taxon>Euarchontoglires</taxon>
        <taxon>Glires</taxon>
        <taxon>Rodentia</taxon>
        <taxon>Myomorpha</taxon>
        <taxon>Muroidea</taxon>
        <taxon>Muridae</taxon>
        <taxon>Murinae</taxon>
        <taxon>Rattus</taxon>
    </lineage>
</organism>
<keyword id="KW-1017">Isopeptide bond</keyword>
<keyword id="KW-0539">Nucleus</keyword>
<keyword id="KW-0597">Phosphoprotein</keyword>
<keyword id="KW-1185">Reference proteome</keyword>
<keyword id="KW-0698">rRNA processing</keyword>
<keyword id="KW-0832">Ubl conjugation</keyword>
<name>UTP11_RAT</name>
<evidence type="ECO:0000250" key="1">
    <source>
        <dbReference type="UniProtKB" id="Q9Y3A2"/>
    </source>
</evidence>
<evidence type="ECO:0000256" key="2">
    <source>
        <dbReference type="SAM" id="MobiDB-lite"/>
    </source>
</evidence>
<evidence type="ECO:0000269" key="3">
    <source>
    </source>
</evidence>
<evidence type="ECO:0000305" key="4"/>
<evidence type="ECO:0000312" key="5">
    <source>
        <dbReference type="RGD" id="621412"/>
    </source>
</evidence>
<accession>Q8R5K5</accession>